<proteinExistence type="evidence at protein level"/>
<reference key="1">
    <citation type="journal article" date="2009" name="Electron. J. Biotechnol.">
        <title>Group III PLA2 from the scorpion, Mesobuthus tamulus: cloning and recombinant expression in E. coli.</title>
        <authorList>
            <person name="Hariprasad R.G."/>
            <person name="Saravanan K."/>
            <person name="Singh S.B."/>
            <person name="Das U."/>
            <person name="Sharma S."/>
            <person name="Kaur P."/>
            <person name="Singh T.P."/>
            <person name="Srinivasan A."/>
        </authorList>
    </citation>
    <scope>NUCLEOTIDE SEQUENCE [MRNA]</scope>
    <scope>COFACTOR</scope>
    <scope>BIOPHYSICOCHEMICAL PROPERTIES</scope>
    <source>
        <tissue>Venom gland</tissue>
    </source>
</reference>
<reference key="2">
    <citation type="journal article" date="2011" name="Int. J. Biol. Macromol.">
        <title>Structural analysis of a group III Glu62-phospholipase A2 from the scorpion, Mesobuthus tamulus: targeting and reversible inhibition by native peptides.</title>
        <authorList>
            <person name="Hariprasad G."/>
            <person name="Kumar M."/>
            <person name="Srinivasan A."/>
            <person name="Kaur P."/>
            <person name="Singh T.P."/>
            <person name="Jithesh O."/>
        </authorList>
    </citation>
    <scope>3D-STRUCTURE MODELING</scope>
</reference>
<name>PA2_HOTTA</name>
<keyword id="KW-0106">Calcium</keyword>
<keyword id="KW-0108">Calcium channel impairing toxin</keyword>
<keyword id="KW-1015">Disulfide bond</keyword>
<keyword id="KW-0325">Glycoprotein</keyword>
<keyword id="KW-0378">Hydrolase</keyword>
<keyword id="KW-0872">Ion channel impairing toxin</keyword>
<keyword id="KW-0442">Lipid degradation</keyword>
<keyword id="KW-0443">Lipid metabolism</keyword>
<keyword id="KW-0479">Metal-binding</keyword>
<keyword id="KW-0528">Neurotoxin</keyword>
<keyword id="KW-1219">Ryanodine-sensitive calcium-release channel impairing toxin</keyword>
<keyword id="KW-0964">Secreted</keyword>
<keyword id="KW-0732">Signal</keyword>
<keyword id="KW-0800">Toxin</keyword>
<keyword id="KW-0865">Zymogen</keyword>
<organism>
    <name type="scientific">Hottentotta tamulus</name>
    <name type="common">Eastern Indian scorpion</name>
    <name type="synonym">Mesobuthus tamulus</name>
    <dbReference type="NCBI Taxonomy" id="34647"/>
    <lineage>
        <taxon>Eukaryota</taxon>
        <taxon>Metazoa</taxon>
        <taxon>Ecdysozoa</taxon>
        <taxon>Arthropoda</taxon>
        <taxon>Chelicerata</taxon>
        <taxon>Arachnida</taxon>
        <taxon>Scorpiones</taxon>
        <taxon>Buthida</taxon>
        <taxon>Buthoidea</taxon>
        <taxon>Buthidae</taxon>
        <taxon>Mesobuthus</taxon>
    </lineage>
</organism>
<accession>Q6T178</accession>
<protein>
    <recommendedName>
        <fullName>Phospholipase A2</fullName>
        <shortName>MtsPLA2</shortName>
    </recommendedName>
    <component>
        <recommendedName>
            <fullName>Large subunit</fullName>
            <ecNumber>3.1.1.4</ecNumber>
        </recommendedName>
    </component>
    <component>
        <recommendedName>
            <fullName>Small subunit</fullName>
        </recommendedName>
    </component>
</protein>
<feature type="signal peptide" evidence="1">
    <location>
        <begin position="1"/>
        <end status="unknown"/>
    </location>
</feature>
<feature type="propeptide" id="PRO_0000429187" evidence="1">
    <location>
        <begin status="unknown"/>
        <end position="31"/>
    </location>
</feature>
<feature type="chain" id="PRO_0000429188" description="Large subunit" evidence="1">
    <location>
        <begin position="32"/>
        <end position="135"/>
    </location>
</feature>
<feature type="propeptide" id="PRO_0000429189" evidence="1">
    <location>
        <begin position="136"/>
        <end position="140"/>
    </location>
</feature>
<feature type="chain" id="PRO_0000429190" description="Small subunit" evidence="1">
    <location>
        <begin position="141"/>
        <end position="167"/>
    </location>
</feature>
<feature type="active site" evidence="4">
    <location>
        <position position="64"/>
    </location>
</feature>
<feature type="binding site" evidence="2">
    <location>
        <position position="38"/>
    </location>
    <ligand>
        <name>Ca(2+)</name>
        <dbReference type="ChEBI" id="CHEBI:29108"/>
    </ligand>
</feature>
<feature type="binding site" evidence="2">
    <location>
        <position position="40"/>
    </location>
    <ligand>
        <name>Ca(2+)</name>
        <dbReference type="ChEBI" id="CHEBI:29108"/>
    </ligand>
</feature>
<feature type="binding site" evidence="2">
    <location>
        <position position="42"/>
    </location>
    <ligand>
        <name>Ca(2+)</name>
        <dbReference type="ChEBI" id="CHEBI:29108"/>
    </ligand>
</feature>
<feature type="binding site" evidence="2">
    <location>
        <position position="65"/>
    </location>
    <ligand>
        <name>Ca(2+)</name>
        <dbReference type="ChEBI" id="CHEBI:29108"/>
    </ligand>
</feature>
<feature type="glycosylation site" description="N-linked (GlcNAc...) asparagine" evidence="3">
    <location>
        <position position="47"/>
    </location>
</feature>
<feature type="disulfide bond" evidence="7">
    <location>
        <begin position="39"/>
        <end position="61"/>
    </location>
</feature>
<feature type="disulfide bond" evidence="7">
    <location>
        <begin position="60"/>
        <end position="99"/>
    </location>
</feature>
<feature type="disulfide bond" evidence="7">
    <location>
        <begin position="67"/>
        <end position="92"/>
    </location>
</feature>
<feature type="disulfide bond" evidence="7">
    <location>
        <begin position="90"/>
        <end position="127"/>
    </location>
</feature>
<feature type="disulfide bond" description="Interchain (between large and small subunits)" evidence="7">
    <location>
        <begin position="132"/>
        <end position="144"/>
    </location>
</feature>
<sequence>MHTPKHAIRRMSKGEMEFFEGRCQRMGEAKRTMWGTKWCGSGNEAINYTDLGYFSNLDSCCRTHDHCDSIPAGETKYGLTNEGKYTMMNCKCESAFEKCLRDVRGILEGKAAAAVRKTYFDLYGNGCFNVKCPSGARSARSEECTNGMATYTGETGYGAWAINKLNG</sequence>
<dbReference type="EC" id="3.1.1.4"/>
<dbReference type="EMBL" id="AY443497">
    <property type="protein sequence ID" value="AAR16429.1"/>
    <property type="molecule type" value="mRNA"/>
</dbReference>
<dbReference type="SMR" id="Q6T178"/>
<dbReference type="GO" id="GO:0005576">
    <property type="term" value="C:extracellular region"/>
    <property type="evidence" value="ECO:0007669"/>
    <property type="project" value="UniProtKB-SubCell"/>
</dbReference>
<dbReference type="GO" id="GO:0005246">
    <property type="term" value="F:calcium channel regulator activity"/>
    <property type="evidence" value="ECO:0007669"/>
    <property type="project" value="UniProtKB-KW"/>
</dbReference>
<dbReference type="GO" id="GO:0046872">
    <property type="term" value="F:metal ion binding"/>
    <property type="evidence" value="ECO:0007669"/>
    <property type="project" value="UniProtKB-KW"/>
</dbReference>
<dbReference type="GO" id="GO:0004623">
    <property type="term" value="F:phospholipase A2 activity"/>
    <property type="evidence" value="ECO:0007669"/>
    <property type="project" value="UniProtKB-EC"/>
</dbReference>
<dbReference type="GO" id="GO:0090729">
    <property type="term" value="F:toxin activity"/>
    <property type="evidence" value="ECO:0007669"/>
    <property type="project" value="UniProtKB-KW"/>
</dbReference>
<dbReference type="GO" id="GO:0050482">
    <property type="term" value="P:arachidonate secretion"/>
    <property type="evidence" value="ECO:0007669"/>
    <property type="project" value="InterPro"/>
</dbReference>
<dbReference type="GO" id="GO:0016042">
    <property type="term" value="P:lipid catabolic process"/>
    <property type="evidence" value="ECO:0007669"/>
    <property type="project" value="UniProtKB-KW"/>
</dbReference>
<dbReference type="GO" id="GO:0006644">
    <property type="term" value="P:phospholipid metabolic process"/>
    <property type="evidence" value="ECO:0007669"/>
    <property type="project" value="InterPro"/>
</dbReference>
<dbReference type="Gene3D" id="1.20.90.10">
    <property type="entry name" value="Phospholipase A2 domain"/>
    <property type="match status" value="1"/>
</dbReference>
<dbReference type="InterPro" id="IPR016090">
    <property type="entry name" value="PLipase_A2_dom"/>
</dbReference>
<dbReference type="InterPro" id="IPR036444">
    <property type="entry name" value="PLipase_A2_dom_sf"/>
</dbReference>
<dbReference type="InterPro" id="IPR033113">
    <property type="entry name" value="PLipase_A2_His_AS"/>
</dbReference>
<dbReference type="PANTHER" id="PTHR12253">
    <property type="entry name" value="RH14732P"/>
    <property type="match status" value="1"/>
</dbReference>
<dbReference type="Pfam" id="PF05826">
    <property type="entry name" value="Phospholip_A2_2"/>
    <property type="match status" value="1"/>
</dbReference>
<dbReference type="SUPFAM" id="SSF48619">
    <property type="entry name" value="Phospholipase A2, PLA2"/>
    <property type="match status" value="1"/>
</dbReference>
<dbReference type="PROSITE" id="PS00118">
    <property type="entry name" value="PA2_HIS"/>
    <property type="match status" value="1"/>
</dbReference>
<comment type="function">
    <text evidence="1">Phospholipase toxin, which catalyzes the calcium-dependent hydrolysis of the 2-acyl groups in 3-sn-phosphoglycerides. Inhibits both skeletal (RYR1) and cardiac (RYR2) ryanodine receptors (calcium release channels). Probably blocks ryanodine receptors by generating a lipid product (By similarity). Shows hemolytic activity, but it is not know if it is direct or indirect.</text>
</comment>
<comment type="catalytic activity">
    <reaction evidence="4">
        <text>a 1,2-diacyl-sn-glycero-3-phosphocholine + H2O = a 1-acyl-sn-glycero-3-phosphocholine + a fatty acid + H(+)</text>
        <dbReference type="Rhea" id="RHEA:15801"/>
        <dbReference type="ChEBI" id="CHEBI:15377"/>
        <dbReference type="ChEBI" id="CHEBI:15378"/>
        <dbReference type="ChEBI" id="CHEBI:28868"/>
        <dbReference type="ChEBI" id="CHEBI:57643"/>
        <dbReference type="ChEBI" id="CHEBI:58168"/>
        <dbReference type="EC" id="3.1.1.4"/>
    </reaction>
</comment>
<comment type="cofactor">
    <cofactor evidence="5">
        <name>Ca(2+)</name>
        <dbReference type="ChEBI" id="CHEBI:29108"/>
    </cofactor>
    <text evidence="5">Binds 1 Ca(2+) ion.</text>
</comment>
<comment type="biophysicochemical properties">
    <phDependence>
        <text evidence="5">Optimum pH is 8.0.</text>
    </phDependence>
</comment>
<comment type="subunit">
    <text evidence="1">Heterodimer composed of a large subunit and a small subunit; disulfide-linked.</text>
</comment>
<comment type="subcellular location">
    <subcellularLocation>
        <location evidence="1">Secreted</location>
    </subcellularLocation>
</comment>
<comment type="tissue specificity">
    <text>Expressed by the venom gland.</text>
</comment>
<comment type="similarity">
    <text evidence="6">Belongs to the phospholipase A2 family. Group III subfamily.</text>
</comment>
<evidence type="ECO:0000250" key="1"/>
<evidence type="ECO:0000250" key="2">
    <source>
        <dbReference type="UniProtKB" id="P00630"/>
    </source>
</evidence>
<evidence type="ECO:0000255" key="3"/>
<evidence type="ECO:0000255" key="4">
    <source>
        <dbReference type="PROSITE-ProRule" id="PRU10035"/>
    </source>
</evidence>
<evidence type="ECO:0000269" key="5">
    <source ref="1"/>
</evidence>
<evidence type="ECO:0000305" key="6"/>
<evidence type="ECO:0000305" key="7">
    <source>
    </source>
</evidence>